<feature type="chain" id="PRO_0000429810" description="Hyperosmolality-gated Ca2+ permeable channel 2.3">
    <location>
        <begin position="1"/>
        <end position="703"/>
    </location>
</feature>
<feature type="topological domain" description="Extracellular" evidence="4 8">
    <location>
        <begin position="1"/>
        <end position="3"/>
    </location>
</feature>
<feature type="transmembrane region" description="Helical; Name=TM0" evidence="4 8">
    <location>
        <begin position="4"/>
        <end position="26"/>
    </location>
</feature>
<feature type="topological domain" description="Cytoplasmic" evidence="4 8">
    <location>
        <begin position="27"/>
        <end position="81"/>
    </location>
</feature>
<feature type="transmembrane region" description="Helical; Name=TM1" evidence="4 8">
    <location>
        <begin position="82"/>
        <end position="115"/>
    </location>
</feature>
<feature type="topological domain" description="Extracellular" evidence="4 8">
    <location>
        <begin position="116"/>
        <end position="143"/>
    </location>
</feature>
<feature type="transmembrane region" description="Helical; Name=TM2" evidence="4 8">
    <location>
        <begin position="144"/>
        <end position="165"/>
    </location>
</feature>
<feature type="topological domain" description="Cytoplasmic" evidence="4 8">
    <location>
        <begin position="166"/>
        <end position="355"/>
    </location>
</feature>
<feature type="transmembrane region" description="Helical; Name=TM3" evidence="4 8">
    <location>
        <begin position="356"/>
        <end position="382"/>
    </location>
</feature>
<feature type="topological domain" description="Extracellular" evidence="4 8">
    <location>
        <begin position="383"/>
        <end position="410"/>
    </location>
</feature>
<feature type="transmembrane region" description="Helical; Name=TM4" evidence="4 8">
    <location>
        <begin position="411"/>
        <end position="432"/>
    </location>
</feature>
<feature type="topological domain" description="Cytoplasmic" evidence="4 8">
    <location>
        <begin position="433"/>
        <end position="436"/>
    </location>
</feature>
<feature type="transmembrane region" description="Helical; Name=TM5" evidence="4 8">
    <location>
        <begin position="437"/>
        <end position="463"/>
    </location>
</feature>
<feature type="topological domain" description="Extracellular" evidence="4 8">
    <location>
        <begin position="464"/>
        <end position="489"/>
    </location>
</feature>
<feature type="transmembrane region" description="Helical; Name=TM6" evidence="4 8">
    <location>
        <begin position="490"/>
        <end position="512"/>
    </location>
</feature>
<feature type="topological domain" description="Cytoplasmic" evidence="4 8">
    <location>
        <begin position="513"/>
        <end position="540"/>
    </location>
</feature>
<feature type="transmembrane region" description="Helical; Name=TM7" evidence="4 8">
    <location>
        <begin position="541"/>
        <end position="561"/>
    </location>
</feature>
<feature type="topological domain" description="Extracellular" evidence="4 8">
    <location>
        <position position="562"/>
    </location>
</feature>
<feature type="transmembrane region" description="Helical; Name=TM8" evidence="4 8">
    <location>
        <begin position="563"/>
        <end position="586"/>
    </location>
</feature>
<feature type="topological domain" description="Cytoplasmic" evidence="4 8">
    <location>
        <begin position="587"/>
        <end position="598"/>
    </location>
</feature>
<feature type="transmembrane region" description="Helical; Name=TM9" evidence="4 8">
    <location>
        <begin position="599"/>
        <end position="623"/>
    </location>
</feature>
<feature type="topological domain" description="Extracellular" evidence="4 8">
    <location>
        <begin position="624"/>
        <end position="626"/>
    </location>
</feature>
<feature type="transmembrane region" description="Helical; Name=TM10" evidence="4 8">
    <location>
        <begin position="627"/>
        <end position="655"/>
    </location>
</feature>
<feature type="topological domain" description="Cytoplasmic" evidence="4 8">
    <location>
        <begin position="656"/>
        <end position="703"/>
    </location>
</feature>
<feature type="coiled-coil region" evidence="2">
    <location>
        <begin position="228"/>
        <end position="300"/>
    </location>
</feature>
<feature type="sequence conflict" description="In Ref. 5; BAD94293." evidence="7" ref="5">
    <original>D</original>
    <variation>G</variation>
    <location>
        <position position="273"/>
    </location>
</feature>
<feature type="sequence conflict" description="In Ref. 1; CAA56145." evidence="7" ref="1">
    <original>L</original>
    <variation>V</variation>
    <location>
        <position position="584"/>
    </location>
</feature>
<feature type="helix" evidence="9">
    <location>
        <begin position="3"/>
        <end position="24"/>
    </location>
</feature>
<feature type="helix" evidence="9">
    <location>
        <begin position="67"/>
        <end position="70"/>
    </location>
</feature>
<feature type="helix" evidence="9">
    <location>
        <begin position="74"/>
        <end position="80"/>
    </location>
</feature>
<feature type="helix" evidence="9">
    <location>
        <begin position="83"/>
        <end position="108"/>
    </location>
</feature>
<feature type="helix" evidence="9">
    <location>
        <begin position="111"/>
        <end position="114"/>
    </location>
</feature>
<feature type="helix" evidence="9">
    <location>
        <begin position="131"/>
        <end position="134"/>
    </location>
</feature>
<feature type="helix" evidence="9">
    <location>
        <begin position="136"/>
        <end position="138"/>
    </location>
</feature>
<feature type="helix" evidence="9">
    <location>
        <begin position="146"/>
        <end position="181"/>
    </location>
</feature>
<feature type="helix" evidence="9">
    <location>
        <begin position="186"/>
        <end position="188"/>
    </location>
</feature>
<feature type="strand" evidence="9">
    <location>
        <begin position="189"/>
        <end position="194"/>
    </location>
</feature>
<feature type="helix" evidence="9">
    <location>
        <begin position="204"/>
        <end position="215"/>
    </location>
</feature>
<feature type="turn" evidence="9">
    <location>
        <begin position="217"/>
        <end position="219"/>
    </location>
</feature>
<feature type="strand" evidence="9">
    <location>
        <begin position="220"/>
        <end position="224"/>
    </location>
</feature>
<feature type="strand" evidence="9">
    <location>
        <begin position="303"/>
        <end position="310"/>
    </location>
</feature>
<feature type="helix" evidence="9">
    <location>
        <begin position="311"/>
        <end position="319"/>
    </location>
</feature>
<feature type="strand" evidence="9">
    <location>
        <begin position="323"/>
        <end position="325"/>
    </location>
</feature>
<feature type="strand" evidence="9">
    <location>
        <begin position="328"/>
        <end position="333"/>
    </location>
</feature>
<feature type="helix" evidence="9">
    <location>
        <begin position="337"/>
        <end position="339"/>
    </location>
</feature>
<feature type="helix" evidence="9">
    <location>
        <begin position="342"/>
        <end position="346"/>
    </location>
</feature>
<feature type="helix" evidence="9">
    <location>
        <begin position="349"/>
        <end position="367"/>
    </location>
</feature>
<feature type="helix" evidence="9">
    <location>
        <begin position="412"/>
        <end position="419"/>
    </location>
</feature>
<feature type="helix" evidence="9">
    <location>
        <begin position="422"/>
        <end position="430"/>
    </location>
</feature>
<feature type="helix" evidence="9">
    <location>
        <begin position="438"/>
        <end position="456"/>
    </location>
</feature>
<feature type="helix" evidence="9">
    <location>
        <begin position="458"/>
        <end position="462"/>
    </location>
</feature>
<feature type="helix" evidence="9">
    <location>
        <begin position="467"/>
        <end position="473"/>
    </location>
</feature>
<feature type="helix" evidence="9">
    <location>
        <begin position="477"/>
        <end position="479"/>
    </location>
</feature>
<feature type="helix" evidence="9">
    <location>
        <begin position="480"/>
        <end position="485"/>
    </location>
</feature>
<feature type="helix" evidence="9">
    <location>
        <begin position="489"/>
        <end position="491"/>
    </location>
</feature>
<feature type="helix" evidence="9">
    <location>
        <begin position="492"/>
        <end position="511"/>
    </location>
</feature>
<feature type="turn" evidence="9">
    <location>
        <begin position="512"/>
        <end position="516"/>
    </location>
</feature>
<feature type="strand" evidence="9">
    <location>
        <begin position="538"/>
        <end position="540"/>
    </location>
</feature>
<feature type="helix" evidence="9">
    <location>
        <begin position="541"/>
        <end position="561"/>
    </location>
</feature>
<feature type="helix" evidence="9">
    <location>
        <begin position="563"/>
        <end position="565"/>
    </location>
</feature>
<feature type="helix" evidence="9">
    <location>
        <begin position="566"/>
        <end position="586"/>
    </location>
</feature>
<feature type="turn" evidence="9">
    <location>
        <begin position="595"/>
        <end position="598"/>
    </location>
</feature>
<feature type="helix" evidence="9">
    <location>
        <begin position="599"/>
        <end position="623"/>
    </location>
</feature>
<feature type="helix" evidence="9">
    <location>
        <begin position="627"/>
        <end position="632"/>
    </location>
</feature>
<feature type="helix" evidence="9">
    <location>
        <begin position="635"/>
        <end position="650"/>
    </location>
</feature>
<feature type="helix" evidence="9">
    <location>
        <begin position="652"/>
        <end position="655"/>
    </location>
</feature>
<feature type="helix" evidence="9">
    <location>
        <begin position="660"/>
        <end position="673"/>
    </location>
</feature>
<feature type="helix" evidence="9">
    <location>
        <begin position="676"/>
        <end position="683"/>
    </location>
</feature>
<feature type="turn" evidence="9">
    <location>
        <begin position="684"/>
        <end position="687"/>
    </location>
</feature>
<sequence length="703" mass="79726">MLLSALLTSVGINLGLCFLFFTLYSILRKQPSNVTVYGPRLVKKDGKSQQSNEFNLERLLPTAGWVKRALEPTNDEILSNLGLDALVFIRVFVFSIRVFSFASVVGIFILLPVNYMGTEFEEFFDLPKKSMDNFSISNVNDGSNKLWIHFCAIYIFTAVVCSLLYYEHKYILTKRIAHLYSSKPQPQEFTVLVSGVPLVSGNSISETVENFFREYHSSSYLSHIVVHRTDKLKVLMNDAEKLYKKLTRVKSGSISRQKSRWGGFLGMFGNNVDVVDHYQKKLDKLEDDMRLKQSLLAGEEVPAAFVSFRTRHGAAIATNIQQGIDPTQWLTEAAPEPEDVHWPFFTASFVRRWISNVVVLVAFVALLILYIVPVVLVQGLANLHQLETWFPFLKGILNMKIVSQVITGYLPSLIFQLFLLIVPPIMLLLSSMQGFISHSQIEKSACIKLLIFTVWNSFFANVLSGSALYRVNVFLEPKTIPRVLAAAVPAQASFFVSYVVTSGWTGLSSEILRLVPLLWSFITKLFGKEDDKEFEVPSTPFCQEIPRILFFGLLGITYFFLSPLILPFLLVYYCLGYIIYRNQLLNVYAAKYETGGKFWPIVHSYTIFSLVLMHIIAVGLFGLKELPVASSLTIPLPVLTVLFSIYCQRRFLPNFKSYPTQCLVNKDKADEREQNMSEFYSELVVAYRDPALSASQDSRDISP</sequence>
<proteinExistence type="evidence at protein level"/>
<dbReference type="EMBL" id="X78422">
    <property type="protein sequence ID" value="CAA55187.1"/>
    <property type="status" value="ALT_INIT"/>
    <property type="molecule type" value="mRNA"/>
</dbReference>
<dbReference type="EMBL" id="X79707">
    <property type="protein sequence ID" value="CAA56145.1"/>
    <property type="status" value="ALT_SEQ"/>
    <property type="molecule type" value="Genomic_DNA"/>
</dbReference>
<dbReference type="EMBL" id="AC008261">
    <property type="protein sequence ID" value="AAF26164.1"/>
    <property type="status" value="ALT_SEQ"/>
    <property type="molecule type" value="Genomic_DNA"/>
</dbReference>
<dbReference type="EMBL" id="CP002686">
    <property type="protein sequence ID" value="AEE73610.1"/>
    <property type="molecule type" value="Genomic_DNA"/>
</dbReference>
<dbReference type="EMBL" id="BT002498">
    <property type="protein sequence ID" value="AAO00858.1"/>
    <property type="molecule type" value="mRNA"/>
</dbReference>
<dbReference type="EMBL" id="BT008419">
    <property type="protein sequence ID" value="AAP37778.1"/>
    <property type="molecule type" value="mRNA"/>
</dbReference>
<dbReference type="EMBL" id="AK221381">
    <property type="protein sequence ID" value="BAD94293.1"/>
    <property type="molecule type" value="mRNA"/>
</dbReference>
<dbReference type="PIR" id="S51583">
    <property type="entry name" value="S51583"/>
</dbReference>
<dbReference type="RefSeq" id="NP_186759.2">
    <molecule id="Q8GUH7-1"/>
    <property type="nucleotide sequence ID" value="NM_110975.5"/>
</dbReference>
<dbReference type="PDB" id="8T57">
    <property type="method" value="EM"/>
    <property type="resolution" value="2.70 A"/>
    <property type="chains" value="A/B=1-703"/>
</dbReference>
<dbReference type="PDBsum" id="8T57"/>
<dbReference type="EMDB" id="EMD-41044"/>
<dbReference type="SMR" id="Q8GUH7"/>
<dbReference type="FunCoup" id="Q8GUH7">
    <property type="interactions" value="1608"/>
</dbReference>
<dbReference type="STRING" id="3702.Q8GUH7"/>
<dbReference type="iPTMnet" id="Q8GUH7"/>
<dbReference type="PaxDb" id="3702-AT3G01100.1"/>
<dbReference type="ProteomicsDB" id="220352">
    <molecule id="Q8GUH7-1"/>
</dbReference>
<dbReference type="EnsemblPlants" id="AT3G01100.1">
    <molecule id="Q8GUH7-1"/>
    <property type="protein sequence ID" value="AT3G01100.1"/>
    <property type="gene ID" value="AT3G01100"/>
</dbReference>
<dbReference type="GeneID" id="821205"/>
<dbReference type="Gramene" id="AT3G01100.1">
    <molecule id="Q8GUH7-1"/>
    <property type="protein sequence ID" value="AT3G01100.1"/>
    <property type="gene ID" value="AT3G01100"/>
</dbReference>
<dbReference type="KEGG" id="ath:AT3G01100"/>
<dbReference type="Araport" id="AT3G01100"/>
<dbReference type="TAIR" id="AT3G01100">
    <property type="gene designation" value="HYP1"/>
</dbReference>
<dbReference type="eggNOG" id="KOG1134">
    <property type="taxonomic scope" value="Eukaryota"/>
</dbReference>
<dbReference type="HOGENOM" id="CLU_002458_7_1_1"/>
<dbReference type="InParanoid" id="Q8GUH7"/>
<dbReference type="PhylomeDB" id="Q8GUH7"/>
<dbReference type="PRO" id="PR:Q8GUH7"/>
<dbReference type="Proteomes" id="UP000006548">
    <property type="component" value="Chromosome 3"/>
</dbReference>
<dbReference type="ExpressionAtlas" id="Q8GUH7">
    <property type="expression patterns" value="baseline and differential"/>
</dbReference>
<dbReference type="GO" id="GO:0016020">
    <property type="term" value="C:membrane"/>
    <property type="evidence" value="ECO:0007669"/>
    <property type="project" value="UniProtKB-SubCell"/>
</dbReference>
<dbReference type="GO" id="GO:0005227">
    <property type="term" value="F:calcium-activated cation channel activity"/>
    <property type="evidence" value="ECO:0007669"/>
    <property type="project" value="InterPro"/>
</dbReference>
<dbReference type="GO" id="GO:0008381">
    <property type="term" value="F:mechanosensitive monoatomic ion channel activity"/>
    <property type="evidence" value="ECO:0000314"/>
    <property type="project" value="TAIR"/>
</dbReference>
<dbReference type="InterPro" id="IPR045122">
    <property type="entry name" value="Csc1-like"/>
</dbReference>
<dbReference type="InterPro" id="IPR003864">
    <property type="entry name" value="CSC1/OSCA1-like_7TM"/>
</dbReference>
<dbReference type="InterPro" id="IPR027815">
    <property type="entry name" value="CSC1/OSCA1-like_cyt"/>
</dbReference>
<dbReference type="InterPro" id="IPR032880">
    <property type="entry name" value="Csc1/OSCA1-like_N"/>
</dbReference>
<dbReference type="PANTHER" id="PTHR13018:SF109">
    <property type="entry name" value="CSC1-LIKE PROTEIN HYP1"/>
    <property type="match status" value="1"/>
</dbReference>
<dbReference type="PANTHER" id="PTHR13018">
    <property type="entry name" value="PROBABLE MEMBRANE PROTEIN DUF221-RELATED"/>
    <property type="match status" value="1"/>
</dbReference>
<dbReference type="Pfam" id="PF14703">
    <property type="entry name" value="PHM7_cyt"/>
    <property type="match status" value="1"/>
</dbReference>
<dbReference type="Pfam" id="PF02714">
    <property type="entry name" value="RSN1_7TM"/>
    <property type="match status" value="1"/>
</dbReference>
<dbReference type="Pfam" id="PF13967">
    <property type="entry name" value="RSN1_TM"/>
    <property type="match status" value="1"/>
</dbReference>
<evidence type="ECO:0000250" key="1">
    <source>
        <dbReference type="UniProtKB" id="Q5XEZ5"/>
    </source>
</evidence>
<evidence type="ECO:0000255" key="2"/>
<evidence type="ECO:0000269" key="3">
    <source>
    </source>
</evidence>
<evidence type="ECO:0000269" key="4">
    <source>
    </source>
</evidence>
<evidence type="ECO:0000303" key="5">
    <source>
    </source>
</evidence>
<evidence type="ECO:0000303" key="6">
    <source>
    </source>
</evidence>
<evidence type="ECO:0000305" key="7"/>
<evidence type="ECO:0007744" key="8">
    <source>
        <dbReference type="PDB" id="8T57"/>
    </source>
</evidence>
<evidence type="ECO:0007829" key="9">
    <source>
        <dbReference type="PDB" id="8T57"/>
    </source>
</evidence>
<accession>Q8GUH7</accession>
<accession>Q39075</accession>
<accession>Q39126</accession>
<accession>Q56YE2</accession>
<reference key="1">
    <citation type="journal article" date="1994" name="Mol. Gen. Genet.">
        <title>Gene density and organization in a small region of the Arabidopsis thaliana genome.</title>
        <authorList>
            <person name="le Guen L."/>
            <person name="Thomas M."/>
            <person name="Kreis M."/>
        </authorList>
    </citation>
    <scope>NUCLEOTIDE SEQUENCE [GENOMIC DNA]</scope>
    <scope>NUCLEOTIDE SEQUENCE [MRNA] OF 170-703</scope>
    <source>
        <strain>cv. Columbia</strain>
    </source>
</reference>
<reference key="2">
    <citation type="journal article" date="2000" name="Nature">
        <title>Sequence and analysis of chromosome 3 of the plant Arabidopsis thaliana.</title>
        <authorList>
            <person name="Salanoubat M."/>
            <person name="Lemcke K."/>
            <person name="Rieger M."/>
            <person name="Ansorge W."/>
            <person name="Unseld M."/>
            <person name="Fartmann B."/>
            <person name="Valle G."/>
            <person name="Bloecker H."/>
            <person name="Perez-Alonso M."/>
            <person name="Obermaier B."/>
            <person name="Delseny M."/>
            <person name="Boutry M."/>
            <person name="Grivell L.A."/>
            <person name="Mache R."/>
            <person name="Puigdomenech P."/>
            <person name="De Simone V."/>
            <person name="Choisne N."/>
            <person name="Artiguenave F."/>
            <person name="Robert C."/>
            <person name="Brottier P."/>
            <person name="Wincker P."/>
            <person name="Cattolico L."/>
            <person name="Weissenbach J."/>
            <person name="Saurin W."/>
            <person name="Quetier F."/>
            <person name="Schaefer M."/>
            <person name="Mueller-Auer S."/>
            <person name="Gabel C."/>
            <person name="Fuchs M."/>
            <person name="Benes V."/>
            <person name="Wurmbach E."/>
            <person name="Drzonek H."/>
            <person name="Erfle H."/>
            <person name="Jordan N."/>
            <person name="Bangert S."/>
            <person name="Wiedelmann R."/>
            <person name="Kranz H."/>
            <person name="Voss H."/>
            <person name="Holland R."/>
            <person name="Brandt P."/>
            <person name="Nyakatura G."/>
            <person name="Vezzi A."/>
            <person name="D'Angelo M."/>
            <person name="Pallavicini A."/>
            <person name="Toppo S."/>
            <person name="Simionati B."/>
            <person name="Conrad A."/>
            <person name="Hornischer K."/>
            <person name="Kauer G."/>
            <person name="Loehnert T.-H."/>
            <person name="Nordsiek G."/>
            <person name="Reichelt J."/>
            <person name="Scharfe M."/>
            <person name="Schoen O."/>
            <person name="Bargues M."/>
            <person name="Terol J."/>
            <person name="Climent J."/>
            <person name="Navarro P."/>
            <person name="Collado C."/>
            <person name="Perez-Perez A."/>
            <person name="Ottenwaelder B."/>
            <person name="Duchemin D."/>
            <person name="Cooke R."/>
            <person name="Laudie M."/>
            <person name="Berger-Llauro C."/>
            <person name="Purnelle B."/>
            <person name="Masuy D."/>
            <person name="de Haan M."/>
            <person name="Maarse A.C."/>
            <person name="Alcaraz J.-P."/>
            <person name="Cottet A."/>
            <person name="Casacuberta E."/>
            <person name="Monfort A."/>
            <person name="Argiriou A."/>
            <person name="Flores M."/>
            <person name="Liguori R."/>
            <person name="Vitale D."/>
            <person name="Mannhaupt G."/>
            <person name="Haase D."/>
            <person name="Schoof H."/>
            <person name="Rudd S."/>
            <person name="Zaccaria P."/>
            <person name="Mewes H.-W."/>
            <person name="Mayer K.F.X."/>
            <person name="Kaul S."/>
            <person name="Town C.D."/>
            <person name="Koo H.L."/>
            <person name="Tallon L.J."/>
            <person name="Jenkins J."/>
            <person name="Rooney T."/>
            <person name="Rizzo M."/>
            <person name="Walts A."/>
            <person name="Utterback T."/>
            <person name="Fujii C.Y."/>
            <person name="Shea T.P."/>
            <person name="Creasy T.H."/>
            <person name="Haas B."/>
            <person name="Maiti R."/>
            <person name="Wu D."/>
            <person name="Peterson J."/>
            <person name="Van Aken S."/>
            <person name="Pai G."/>
            <person name="Militscher J."/>
            <person name="Sellers P."/>
            <person name="Gill J.E."/>
            <person name="Feldblyum T.V."/>
            <person name="Preuss D."/>
            <person name="Lin X."/>
            <person name="Nierman W.C."/>
            <person name="Salzberg S.L."/>
            <person name="White O."/>
            <person name="Venter J.C."/>
            <person name="Fraser C.M."/>
            <person name="Kaneko T."/>
            <person name="Nakamura Y."/>
            <person name="Sato S."/>
            <person name="Kato T."/>
            <person name="Asamizu E."/>
            <person name="Sasamoto S."/>
            <person name="Kimura T."/>
            <person name="Idesawa K."/>
            <person name="Kawashima K."/>
            <person name="Kishida Y."/>
            <person name="Kiyokawa C."/>
            <person name="Kohara M."/>
            <person name="Matsumoto M."/>
            <person name="Matsuno A."/>
            <person name="Muraki A."/>
            <person name="Nakayama S."/>
            <person name="Nakazaki N."/>
            <person name="Shinpo S."/>
            <person name="Takeuchi C."/>
            <person name="Wada T."/>
            <person name="Watanabe A."/>
            <person name="Yamada M."/>
            <person name="Yasuda M."/>
            <person name="Tabata S."/>
        </authorList>
    </citation>
    <scope>NUCLEOTIDE SEQUENCE [LARGE SCALE GENOMIC DNA]</scope>
    <source>
        <strain>cv. Columbia</strain>
    </source>
</reference>
<reference key="3">
    <citation type="journal article" date="2017" name="Plant J.">
        <title>Araport11: a complete reannotation of the Arabidopsis thaliana reference genome.</title>
        <authorList>
            <person name="Cheng C.Y."/>
            <person name="Krishnakumar V."/>
            <person name="Chan A.P."/>
            <person name="Thibaud-Nissen F."/>
            <person name="Schobel S."/>
            <person name="Town C.D."/>
        </authorList>
    </citation>
    <scope>GENOME REANNOTATION</scope>
    <source>
        <strain>cv. Columbia</strain>
    </source>
</reference>
<reference key="4">
    <citation type="journal article" date="2003" name="Science">
        <title>Empirical analysis of transcriptional activity in the Arabidopsis genome.</title>
        <authorList>
            <person name="Yamada K."/>
            <person name="Lim J."/>
            <person name="Dale J.M."/>
            <person name="Chen H."/>
            <person name="Shinn P."/>
            <person name="Palm C.J."/>
            <person name="Southwick A.M."/>
            <person name="Wu H.C."/>
            <person name="Kim C.J."/>
            <person name="Nguyen M."/>
            <person name="Pham P.K."/>
            <person name="Cheuk R.F."/>
            <person name="Karlin-Newmann G."/>
            <person name="Liu S.X."/>
            <person name="Lam B."/>
            <person name="Sakano H."/>
            <person name="Wu T."/>
            <person name="Yu G."/>
            <person name="Miranda M."/>
            <person name="Quach H.L."/>
            <person name="Tripp M."/>
            <person name="Chang C.H."/>
            <person name="Lee J.M."/>
            <person name="Toriumi M.J."/>
            <person name="Chan M.M."/>
            <person name="Tang C.C."/>
            <person name="Onodera C.S."/>
            <person name="Deng J.M."/>
            <person name="Akiyama K."/>
            <person name="Ansari Y."/>
            <person name="Arakawa T."/>
            <person name="Banh J."/>
            <person name="Banno F."/>
            <person name="Bowser L."/>
            <person name="Brooks S.Y."/>
            <person name="Carninci P."/>
            <person name="Chao Q."/>
            <person name="Choy N."/>
            <person name="Enju A."/>
            <person name="Goldsmith A.D."/>
            <person name="Gurjal M."/>
            <person name="Hansen N.F."/>
            <person name="Hayashizaki Y."/>
            <person name="Johnson-Hopson C."/>
            <person name="Hsuan V.W."/>
            <person name="Iida K."/>
            <person name="Karnes M."/>
            <person name="Khan S."/>
            <person name="Koesema E."/>
            <person name="Ishida J."/>
            <person name="Jiang P.X."/>
            <person name="Jones T."/>
            <person name="Kawai J."/>
            <person name="Kamiya A."/>
            <person name="Meyers C."/>
            <person name="Nakajima M."/>
            <person name="Narusaka M."/>
            <person name="Seki M."/>
            <person name="Sakurai T."/>
            <person name="Satou M."/>
            <person name="Tamse R."/>
            <person name="Vaysberg M."/>
            <person name="Wallender E.K."/>
            <person name="Wong C."/>
            <person name="Yamamura Y."/>
            <person name="Yuan S."/>
            <person name="Shinozaki K."/>
            <person name="Davis R.W."/>
            <person name="Theologis A."/>
            <person name="Ecker J.R."/>
        </authorList>
    </citation>
    <scope>NUCLEOTIDE SEQUENCE [LARGE SCALE MRNA]</scope>
    <source>
        <strain>cv. Columbia</strain>
    </source>
</reference>
<reference key="5">
    <citation type="submission" date="2005-03" db="EMBL/GenBank/DDBJ databases">
        <title>Large-scale analysis of RIKEN Arabidopsis full-length (RAFL) cDNAs.</title>
        <authorList>
            <person name="Totoki Y."/>
            <person name="Seki M."/>
            <person name="Ishida J."/>
            <person name="Nakajima M."/>
            <person name="Enju A."/>
            <person name="Kamiya A."/>
            <person name="Narusaka M."/>
            <person name="Shin-i T."/>
            <person name="Nakagawa M."/>
            <person name="Sakamoto N."/>
            <person name="Oishi K."/>
            <person name="Kohara Y."/>
            <person name="Kobayashi M."/>
            <person name="Toyoda A."/>
            <person name="Sakaki Y."/>
            <person name="Sakurai T."/>
            <person name="Iida K."/>
            <person name="Akiyama K."/>
            <person name="Satou M."/>
            <person name="Toyoda T."/>
            <person name="Konagaya A."/>
            <person name="Carninci P."/>
            <person name="Kawai J."/>
            <person name="Hayashizaki Y."/>
            <person name="Shinozaki K."/>
        </authorList>
    </citation>
    <scope>NUCLEOTIDE SEQUENCE [LARGE SCALE MRNA]</scope>
    <source>
        <strain>cv. Columbia</strain>
    </source>
</reference>
<reference key="6">
    <citation type="journal article" date="2014" name="Cell Res.">
        <title>DUF221 proteins are a family of osmosensitive calcium-permeable cation channels conserved across eukaryotes.</title>
        <authorList>
            <person name="Hou C."/>
            <person name="Tian W."/>
            <person name="Kleist T."/>
            <person name="He K."/>
            <person name="Garcia V."/>
            <person name="Bai F."/>
            <person name="Hao Y."/>
            <person name="Luan S."/>
            <person name="Li L."/>
        </authorList>
    </citation>
    <scope>GENE FAMILY</scope>
</reference>
<reference key="7">
    <citation type="journal article" date="2018" name="Elife">
        <title>OSCA/TMEM63 are an Evolutionarily Conserved Family of Mechanically Activated Ion Channels.</title>
        <authorList>
            <person name="Murthy S.E."/>
            <person name="Dubin A.E."/>
            <person name="Whitwam T."/>
            <person name="Jojoa-Cruz S."/>
            <person name="Cahalan S.M."/>
            <person name="Mousavi S.A.R."/>
            <person name="Ward A.B."/>
            <person name="Patapoutian A."/>
        </authorList>
    </citation>
    <scope>FUNCTION</scope>
</reference>
<reference evidence="8" key="8">
    <citation type="journal article" date="2024" name="Structure">
        <title>Structure of mechanically activated ion channel OSCA2.3 reveals mobile elements in the transmembrane domain.</title>
        <authorList>
            <person name="Jojoa-Cruz S."/>
            <person name="Burendei B."/>
            <person name="Lee W.H."/>
            <person name="Ward A.B."/>
        </authorList>
    </citation>
    <scope>STRUCTURE BY ELECTRON MICROSCOPY (2.70 ANGSTROMS)</scope>
    <scope>SUBUNIT</scope>
</reference>
<protein>
    <recommendedName>
        <fullName evidence="5">Hyperosmolality-gated Ca2+ permeable channel 2.3</fullName>
        <shortName evidence="5">AtOSCA2.3</shortName>
    </recommendedName>
    <alternativeName>
        <fullName evidence="6">HYPOTHETICAL PROTEIN 1</fullName>
    </alternativeName>
</protein>
<gene>
    <name evidence="5" type="primary">OSCA2.3</name>
    <name evidence="6" type="synonym">HYP1</name>
    <name type="ordered locus">At3g01100</name>
    <name type="ORF">T4P13.21</name>
</gene>
<keyword id="KW-0002">3D-structure</keyword>
<keyword id="KW-0025">Alternative splicing</keyword>
<keyword id="KW-0106">Calcium</keyword>
<keyword id="KW-0175">Coiled coil</keyword>
<keyword id="KW-0407">Ion channel</keyword>
<keyword id="KW-0406">Ion transport</keyword>
<keyword id="KW-0472">Membrane</keyword>
<keyword id="KW-1185">Reference proteome</keyword>
<keyword id="KW-0812">Transmembrane</keyword>
<keyword id="KW-1133">Transmembrane helix</keyword>
<keyword id="KW-0813">Transport</keyword>
<organism>
    <name type="scientific">Arabidopsis thaliana</name>
    <name type="common">Mouse-ear cress</name>
    <dbReference type="NCBI Taxonomy" id="3702"/>
    <lineage>
        <taxon>Eukaryota</taxon>
        <taxon>Viridiplantae</taxon>
        <taxon>Streptophyta</taxon>
        <taxon>Embryophyta</taxon>
        <taxon>Tracheophyta</taxon>
        <taxon>Spermatophyta</taxon>
        <taxon>Magnoliopsida</taxon>
        <taxon>eudicotyledons</taxon>
        <taxon>Gunneridae</taxon>
        <taxon>Pentapetalae</taxon>
        <taxon>rosids</taxon>
        <taxon>malvids</taxon>
        <taxon>Brassicales</taxon>
        <taxon>Brassicaceae</taxon>
        <taxon>Camelineae</taxon>
        <taxon>Arabidopsis</taxon>
    </lineage>
</organism>
<comment type="function">
    <text evidence="3">Acts as an osmosensitive calcium-permeable cation channel.</text>
</comment>
<comment type="subunit">
    <text evidence="4">Homodimer.</text>
</comment>
<comment type="subcellular location">
    <subcellularLocation>
        <location evidence="1">Membrane</location>
        <topology evidence="4">Multi-pass membrane protein</topology>
    </subcellularLocation>
</comment>
<comment type="alternative products">
    <event type="alternative splicing"/>
    <isoform>
        <id>Q8GUH7-1</id>
        <name>1</name>
        <sequence type="displayed"/>
    </isoform>
    <text>A number of isoforms are produced. According to EST sequences.</text>
</comment>
<comment type="similarity">
    <text evidence="7">Belongs to the CSC1 (TC 1.A.17) family.</text>
</comment>
<comment type="sequence caution" evidence="7">
    <conflict type="erroneous gene model prediction">
        <sequence resource="EMBL-CDS" id="AAF26164"/>
    </conflict>
</comment>
<comment type="sequence caution" evidence="7">
    <conflict type="erroneous initiation">
        <sequence resource="EMBL-CDS" id="CAA55187"/>
    </conflict>
    <text>Truncated N-terminus.</text>
</comment>
<comment type="sequence caution" evidence="7">
    <conflict type="erroneous gene model prediction">
        <sequence resource="EMBL-CDS" id="CAA56145"/>
    </conflict>
</comment>
<name>OSC23_ARATH</name>